<gene>
    <name evidence="1" type="primary">cysG</name>
    <name type="synonym">cobA2</name>
    <name type="ordered locus">CV_0813</name>
</gene>
<organism>
    <name type="scientific">Chromobacterium violaceum (strain ATCC 12472 / DSM 30191 / JCM 1249 / CCUG 213 / NBRC 12614 / NCIMB 9131 / NCTC 9757 / MK)</name>
    <dbReference type="NCBI Taxonomy" id="243365"/>
    <lineage>
        <taxon>Bacteria</taxon>
        <taxon>Pseudomonadati</taxon>
        <taxon>Pseudomonadota</taxon>
        <taxon>Betaproteobacteria</taxon>
        <taxon>Neisseriales</taxon>
        <taxon>Chromobacteriaceae</taxon>
        <taxon>Chromobacterium</taxon>
    </lineage>
</organism>
<dbReference type="EC" id="2.1.1.107" evidence="1"/>
<dbReference type="EC" id="1.3.1.76" evidence="1"/>
<dbReference type="EC" id="4.99.1.4" evidence="1"/>
<dbReference type="EMBL" id="AE016825">
    <property type="protein sequence ID" value="AAQ58488.1"/>
    <property type="molecule type" value="Genomic_DNA"/>
</dbReference>
<dbReference type="RefSeq" id="WP_011134368.1">
    <property type="nucleotide sequence ID" value="NC_005085.1"/>
</dbReference>
<dbReference type="SMR" id="Q7NZV7"/>
<dbReference type="STRING" id="243365.CV_0813"/>
<dbReference type="KEGG" id="cvi:CV_0813"/>
<dbReference type="eggNOG" id="COG0007">
    <property type="taxonomic scope" value="Bacteria"/>
</dbReference>
<dbReference type="eggNOG" id="COG1648">
    <property type="taxonomic scope" value="Bacteria"/>
</dbReference>
<dbReference type="HOGENOM" id="CLU_011276_2_1_4"/>
<dbReference type="OrthoDB" id="9815856at2"/>
<dbReference type="UniPathway" id="UPA00148">
    <property type="reaction ID" value="UER00211"/>
</dbReference>
<dbReference type="UniPathway" id="UPA00148">
    <property type="reaction ID" value="UER00222"/>
</dbReference>
<dbReference type="UniPathway" id="UPA00262">
    <property type="reaction ID" value="UER00211"/>
</dbReference>
<dbReference type="UniPathway" id="UPA00262">
    <property type="reaction ID" value="UER00222"/>
</dbReference>
<dbReference type="UniPathway" id="UPA00262">
    <property type="reaction ID" value="UER00376"/>
</dbReference>
<dbReference type="Proteomes" id="UP000001424">
    <property type="component" value="Chromosome"/>
</dbReference>
<dbReference type="GO" id="GO:0051287">
    <property type="term" value="F:NAD binding"/>
    <property type="evidence" value="ECO:0007669"/>
    <property type="project" value="InterPro"/>
</dbReference>
<dbReference type="GO" id="GO:0043115">
    <property type="term" value="F:precorrin-2 dehydrogenase activity"/>
    <property type="evidence" value="ECO:0007669"/>
    <property type="project" value="UniProtKB-UniRule"/>
</dbReference>
<dbReference type="GO" id="GO:0051266">
    <property type="term" value="F:sirohydrochlorin ferrochelatase activity"/>
    <property type="evidence" value="ECO:0007669"/>
    <property type="project" value="UniProtKB-EC"/>
</dbReference>
<dbReference type="GO" id="GO:0004851">
    <property type="term" value="F:uroporphyrin-III C-methyltransferase activity"/>
    <property type="evidence" value="ECO:0007669"/>
    <property type="project" value="UniProtKB-UniRule"/>
</dbReference>
<dbReference type="GO" id="GO:0009236">
    <property type="term" value="P:cobalamin biosynthetic process"/>
    <property type="evidence" value="ECO:0007669"/>
    <property type="project" value="UniProtKB-UniRule"/>
</dbReference>
<dbReference type="GO" id="GO:0032259">
    <property type="term" value="P:methylation"/>
    <property type="evidence" value="ECO:0007669"/>
    <property type="project" value="UniProtKB-KW"/>
</dbReference>
<dbReference type="GO" id="GO:0019354">
    <property type="term" value="P:siroheme biosynthetic process"/>
    <property type="evidence" value="ECO:0007669"/>
    <property type="project" value="UniProtKB-UniRule"/>
</dbReference>
<dbReference type="CDD" id="cd11642">
    <property type="entry name" value="SUMT"/>
    <property type="match status" value="1"/>
</dbReference>
<dbReference type="FunFam" id="3.30.950.10:FF:000001">
    <property type="entry name" value="Siroheme synthase"/>
    <property type="match status" value="1"/>
</dbReference>
<dbReference type="FunFam" id="3.40.1010.10:FF:000001">
    <property type="entry name" value="Siroheme synthase"/>
    <property type="match status" value="1"/>
</dbReference>
<dbReference type="Gene3D" id="3.40.1010.10">
    <property type="entry name" value="Cobalt-precorrin-4 Transmethylase, Domain 1"/>
    <property type="match status" value="1"/>
</dbReference>
<dbReference type="Gene3D" id="3.30.950.10">
    <property type="entry name" value="Methyltransferase, Cobalt-precorrin-4 Transmethylase, Domain 2"/>
    <property type="match status" value="1"/>
</dbReference>
<dbReference type="Gene3D" id="3.40.50.720">
    <property type="entry name" value="NAD(P)-binding Rossmann-like Domain"/>
    <property type="match status" value="1"/>
</dbReference>
<dbReference type="Gene3D" id="1.10.8.210">
    <property type="entry name" value="Sirohaem synthase, dimerisation domain"/>
    <property type="match status" value="1"/>
</dbReference>
<dbReference type="Gene3D" id="3.30.160.110">
    <property type="entry name" value="Siroheme synthase, domain 2"/>
    <property type="match status" value="1"/>
</dbReference>
<dbReference type="HAMAP" id="MF_01646">
    <property type="entry name" value="Siroheme_synth"/>
    <property type="match status" value="1"/>
</dbReference>
<dbReference type="InterPro" id="IPR000878">
    <property type="entry name" value="4pyrrol_Mease"/>
</dbReference>
<dbReference type="InterPro" id="IPR035996">
    <property type="entry name" value="4pyrrol_Methylase_sf"/>
</dbReference>
<dbReference type="InterPro" id="IPR014777">
    <property type="entry name" value="4pyrrole_Mease_sub1"/>
</dbReference>
<dbReference type="InterPro" id="IPR014776">
    <property type="entry name" value="4pyrrole_Mease_sub2"/>
</dbReference>
<dbReference type="InterPro" id="IPR006366">
    <property type="entry name" value="CobA/CysG_C"/>
</dbReference>
<dbReference type="InterPro" id="IPR036291">
    <property type="entry name" value="NAD(P)-bd_dom_sf"/>
</dbReference>
<dbReference type="InterPro" id="IPR050161">
    <property type="entry name" value="Siro_Cobalamin_biosynth"/>
</dbReference>
<dbReference type="InterPro" id="IPR037115">
    <property type="entry name" value="Sirohaem_synt_dimer_dom_sf"/>
</dbReference>
<dbReference type="InterPro" id="IPR012409">
    <property type="entry name" value="Sirohaem_synth"/>
</dbReference>
<dbReference type="InterPro" id="IPR019478">
    <property type="entry name" value="Sirohaem_synthase_dimer_dom"/>
</dbReference>
<dbReference type="InterPro" id="IPR006367">
    <property type="entry name" value="Sirohaem_synthase_N"/>
</dbReference>
<dbReference type="InterPro" id="IPR003043">
    <property type="entry name" value="Uropor_MeTrfase_CS"/>
</dbReference>
<dbReference type="NCBIfam" id="TIGR01469">
    <property type="entry name" value="cobA_cysG_Cterm"/>
    <property type="match status" value="1"/>
</dbReference>
<dbReference type="NCBIfam" id="TIGR01470">
    <property type="entry name" value="cysG_Nterm"/>
    <property type="match status" value="1"/>
</dbReference>
<dbReference type="NCBIfam" id="NF004790">
    <property type="entry name" value="PRK06136.1"/>
    <property type="match status" value="1"/>
</dbReference>
<dbReference type="NCBIfam" id="NF007922">
    <property type="entry name" value="PRK10637.1"/>
    <property type="match status" value="1"/>
</dbReference>
<dbReference type="PANTHER" id="PTHR45790:SF1">
    <property type="entry name" value="SIROHEME SYNTHASE"/>
    <property type="match status" value="1"/>
</dbReference>
<dbReference type="PANTHER" id="PTHR45790">
    <property type="entry name" value="SIROHEME SYNTHASE-RELATED"/>
    <property type="match status" value="1"/>
</dbReference>
<dbReference type="Pfam" id="PF10414">
    <property type="entry name" value="CysG_dimeriser"/>
    <property type="match status" value="1"/>
</dbReference>
<dbReference type="Pfam" id="PF13241">
    <property type="entry name" value="NAD_binding_7"/>
    <property type="match status" value="1"/>
</dbReference>
<dbReference type="Pfam" id="PF00590">
    <property type="entry name" value="TP_methylase"/>
    <property type="match status" value="1"/>
</dbReference>
<dbReference type="PIRSF" id="PIRSF036426">
    <property type="entry name" value="Sirohaem_synth"/>
    <property type="match status" value="1"/>
</dbReference>
<dbReference type="SUPFAM" id="SSF51735">
    <property type="entry name" value="NAD(P)-binding Rossmann-fold domains"/>
    <property type="match status" value="1"/>
</dbReference>
<dbReference type="SUPFAM" id="SSF75615">
    <property type="entry name" value="Siroheme synthase middle domains-like"/>
    <property type="match status" value="1"/>
</dbReference>
<dbReference type="SUPFAM" id="SSF53790">
    <property type="entry name" value="Tetrapyrrole methylase"/>
    <property type="match status" value="1"/>
</dbReference>
<dbReference type="PROSITE" id="PS00840">
    <property type="entry name" value="SUMT_2"/>
    <property type="match status" value="1"/>
</dbReference>
<proteinExistence type="inferred from homology"/>
<feature type="chain" id="PRO_0000330500" description="Siroheme synthase">
    <location>
        <begin position="1"/>
        <end position="470"/>
    </location>
</feature>
<feature type="region of interest" description="Precorrin-2 dehydrogenase /sirohydrochlorin ferrochelatase" evidence="1">
    <location>
        <begin position="1"/>
        <end position="203"/>
    </location>
</feature>
<feature type="region of interest" description="Uroporphyrinogen-III C-methyltransferase" evidence="1">
    <location>
        <begin position="216"/>
        <end position="470"/>
    </location>
</feature>
<feature type="active site" description="Proton acceptor" evidence="1">
    <location>
        <position position="248"/>
    </location>
</feature>
<feature type="active site" description="Proton donor" evidence="1">
    <location>
        <position position="270"/>
    </location>
</feature>
<feature type="binding site" evidence="1">
    <location>
        <begin position="22"/>
        <end position="23"/>
    </location>
    <ligand>
        <name>NAD(+)</name>
        <dbReference type="ChEBI" id="CHEBI:57540"/>
    </ligand>
</feature>
<feature type="binding site" evidence="1">
    <location>
        <begin position="43"/>
        <end position="44"/>
    </location>
    <ligand>
        <name>NAD(+)</name>
        <dbReference type="ChEBI" id="CHEBI:57540"/>
    </ligand>
</feature>
<feature type="binding site" evidence="1">
    <location>
        <position position="225"/>
    </location>
    <ligand>
        <name>S-adenosyl-L-methionine</name>
        <dbReference type="ChEBI" id="CHEBI:59789"/>
    </ligand>
</feature>
<feature type="binding site" evidence="1">
    <location>
        <begin position="301"/>
        <end position="303"/>
    </location>
    <ligand>
        <name>S-adenosyl-L-methionine</name>
        <dbReference type="ChEBI" id="CHEBI:59789"/>
    </ligand>
</feature>
<feature type="binding site" evidence="1">
    <location>
        <position position="383"/>
    </location>
    <ligand>
        <name>S-adenosyl-L-methionine</name>
        <dbReference type="ChEBI" id="CHEBI:59789"/>
    </ligand>
</feature>
<feature type="binding site" evidence="1">
    <location>
        <position position="412"/>
    </location>
    <ligand>
        <name>S-adenosyl-L-methionine</name>
        <dbReference type="ChEBI" id="CHEBI:59789"/>
    </ligand>
</feature>
<feature type="modified residue" description="Phosphoserine" evidence="1">
    <location>
        <position position="128"/>
    </location>
</feature>
<sequence length="470" mass="50153">MEFFPIFLKLRHQRCLLVGGGEVALRKARLLLAAGASLQVVAPELAPELADLAERGELEHLPGRYAPALLDGMRLAVAATDDAEVNRAVAADAEARGILVNVVDDAEASRYISPAIIDRSPLMVAVASGGSVPVLARSIRARLESLIPAGYGRLARFGSSFRDAVKARFPDVDARRRFWETVLEGPLADAVMNGDEAAARAEMEKRIAAGGADRAGAVYLVGAGPGNPDLLTFRALRLMQQADVVLYDKLVAPELLELVRRDAERVYVGKARANHALPQDDINQLLVDLARQGKRVLRLKGGDPFTFGRGGEEIATLAEHGIAFEVVPGITSASGAAAYAGIPLTHRDYAQSVTFVTGHKQDGSIDLDWQALTRPQQTVVVYMGVSTAAELCQAFVDNGRAASTPAAAVEWATTERQRTVCGTLAALPGLMASHGIASPALIIVGEVVELADKLSWYRRSENSAVTIQED</sequence>
<accession>Q7NZV7</accession>
<protein>
    <recommendedName>
        <fullName evidence="1">Siroheme synthase</fullName>
    </recommendedName>
    <domain>
        <recommendedName>
            <fullName evidence="1">Uroporphyrinogen-III C-methyltransferase</fullName>
            <shortName evidence="1">Urogen III methylase</shortName>
            <ecNumber evidence="1">2.1.1.107</ecNumber>
        </recommendedName>
        <alternativeName>
            <fullName evidence="1">SUMT</fullName>
        </alternativeName>
        <alternativeName>
            <fullName evidence="1">Uroporphyrinogen III methylase</fullName>
            <shortName evidence="1">UROM</shortName>
        </alternativeName>
    </domain>
    <domain>
        <recommendedName>
            <fullName evidence="1">Precorrin-2 dehydrogenase</fullName>
            <ecNumber evidence="1">1.3.1.76</ecNumber>
        </recommendedName>
    </domain>
    <domain>
        <recommendedName>
            <fullName evidence="1">Sirohydrochlorin ferrochelatase</fullName>
            <ecNumber evidence="1">4.99.1.4</ecNumber>
        </recommendedName>
    </domain>
</protein>
<comment type="function">
    <text evidence="1">Multifunctional enzyme that catalyzes the SAM-dependent methylations of uroporphyrinogen III at position C-2 and C-7 to form precorrin-2 via precorrin-1. Then it catalyzes the NAD-dependent ring dehydrogenation of precorrin-2 to yield sirohydrochlorin. Finally, it catalyzes the ferrochelation of sirohydrochlorin to yield siroheme.</text>
</comment>
<comment type="catalytic activity">
    <reaction evidence="1">
        <text>uroporphyrinogen III + 2 S-adenosyl-L-methionine = precorrin-2 + 2 S-adenosyl-L-homocysteine + H(+)</text>
        <dbReference type="Rhea" id="RHEA:32459"/>
        <dbReference type="ChEBI" id="CHEBI:15378"/>
        <dbReference type="ChEBI" id="CHEBI:57308"/>
        <dbReference type="ChEBI" id="CHEBI:57856"/>
        <dbReference type="ChEBI" id="CHEBI:58827"/>
        <dbReference type="ChEBI" id="CHEBI:59789"/>
        <dbReference type="EC" id="2.1.1.107"/>
    </reaction>
</comment>
<comment type="catalytic activity">
    <reaction evidence="1">
        <text>precorrin-2 + NAD(+) = sirohydrochlorin + NADH + 2 H(+)</text>
        <dbReference type="Rhea" id="RHEA:15613"/>
        <dbReference type="ChEBI" id="CHEBI:15378"/>
        <dbReference type="ChEBI" id="CHEBI:57540"/>
        <dbReference type="ChEBI" id="CHEBI:57945"/>
        <dbReference type="ChEBI" id="CHEBI:58351"/>
        <dbReference type="ChEBI" id="CHEBI:58827"/>
        <dbReference type="EC" id="1.3.1.76"/>
    </reaction>
</comment>
<comment type="catalytic activity">
    <reaction evidence="1">
        <text>siroheme + 2 H(+) = sirohydrochlorin + Fe(2+)</text>
        <dbReference type="Rhea" id="RHEA:24360"/>
        <dbReference type="ChEBI" id="CHEBI:15378"/>
        <dbReference type="ChEBI" id="CHEBI:29033"/>
        <dbReference type="ChEBI" id="CHEBI:58351"/>
        <dbReference type="ChEBI" id="CHEBI:60052"/>
        <dbReference type="EC" id="4.99.1.4"/>
    </reaction>
</comment>
<comment type="pathway">
    <text evidence="1">Cofactor biosynthesis; adenosylcobalamin biosynthesis; precorrin-2 from uroporphyrinogen III: step 1/1.</text>
</comment>
<comment type="pathway">
    <text evidence="1">Cofactor biosynthesis; adenosylcobalamin biosynthesis; sirohydrochlorin from precorrin-2: step 1/1.</text>
</comment>
<comment type="pathway">
    <text evidence="1">Porphyrin-containing compound metabolism; siroheme biosynthesis; precorrin-2 from uroporphyrinogen III: step 1/1.</text>
</comment>
<comment type="pathway">
    <text evidence="1">Porphyrin-containing compound metabolism; siroheme biosynthesis; siroheme from sirohydrochlorin: step 1/1.</text>
</comment>
<comment type="pathway">
    <text evidence="1">Porphyrin-containing compound metabolism; siroheme biosynthesis; sirohydrochlorin from precorrin-2: step 1/1.</text>
</comment>
<comment type="similarity">
    <text evidence="1">In the N-terminal section; belongs to the precorrin-2 dehydrogenase / sirohydrochlorin ferrochelatase family.</text>
</comment>
<comment type="similarity">
    <text evidence="1">In the C-terminal section; belongs to the precorrin methyltransferase family.</text>
</comment>
<keyword id="KW-0169">Cobalamin biosynthesis</keyword>
<keyword id="KW-0456">Lyase</keyword>
<keyword id="KW-0489">Methyltransferase</keyword>
<keyword id="KW-0511">Multifunctional enzyme</keyword>
<keyword id="KW-0520">NAD</keyword>
<keyword id="KW-0560">Oxidoreductase</keyword>
<keyword id="KW-0597">Phosphoprotein</keyword>
<keyword id="KW-0627">Porphyrin biosynthesis</keyword>
<keyword id="KW-1185">Reference proteome</keyword>
<keyword id="KW-0949">S-adenosyl-L-methionine</keyword>
<keyword id="KW-0808">Transferase</keyword>
<name>CYSG_CHRVO</name>
<evidence type="ECO:0000255" key="1">
    <source>
        <dbReference type="HAMAP-Rule" id="MF_01646"/>
    </source>
</evidence>
<reference key="1">
    <citation type="journal article" date="2003" name="Proc. Natl. Acad. Sci. U.S.A.">
        <title>The complete genome sequence of Chromobacterium violaceum reveals remarkable and exploitable bacterial adaptability.</title>
        <authorList>
            <person name="Vasconcelos A.T.R."/>
            <person name="de Almeida D.F."/>
            <person name="Hungria M."/>
            <person name="Guimaraes C.T."/>
            <person name="Antonio R.V."/>
            <person name="Almeida F.C."/>
            <person name="de Almeida L.G.P."/>
            <person name="de Almeida R."/>
            <person name="Alves-Gomes J.A."/>
            <person name="Andrade E.M."/>
            <person name="Araripe J."/>
            <person name="de Araujo M.F.F."/>
            <person name="Astolfi-Filho S."/>
            <person name="Azevedo V."/>
            <person name="Baptista A.J."/>
            <person name="Bataus L.A.M."/>
            <person name="Batista J.S."/>
            <person name="Belo A."/>
            <person name="van den Berg C."/>
            <person name="Bogo M."/>
            <person name="Bonatto S."/>
            <person name="Bordignon J."/>
            <person name="Brigido M.M."/>
            <person name="Brito C.A."/>
            <person name="Brocchi M."/>
            <person name="Burity H.A."/>
            <person name="Camargo A.A."/>
            <person name="Cardoso D.D.P."/>
            <person name="Carneiro N.P."/>
            <person name="Carraro D.M."/>
            <person name="Carvalho C.M.B."/>
            <person name="Cascardo J.C.M."/>
            <person name="Cavada B.S."/>
            <person name="Chueire L.M.O."/>
            <person name="Creczynski-Pasa T.B."/>
            <person name="Cunha-Junior N.C."/>
            <person name="Fagundes N."/>
            <person name="Falcao C.L."/>
            <person name="Fantinatti F."/>
            <person name="Farias I.P."/>
            <person name="Felipe M.S.S."/>
            <person name="Ferrari L.P."/>
            <person name="Ferro J.A."/>
            <person name="Ferro M.I.T."/>
            <person name="Franco G.R."/>
            <person name="Freitas N.S.A."/>
            <person name="Furlan L.R."/>
            <person name="Gazzinelli R.T."/>
            <person name="Gomes E.A."/>
            <person name="Goncalves P.R."/>
            <person name="Grangeiro T.B."/>
            <person name="Grattapaglia D."/>
            <person name="Grisard E.C."/>
            <person name="Hanna E.S."/>
            <person name="Jardim S.N."/>
            <person name="Laurino J."/>
            <person name="Leoi L.C.T."/>
            <person name="Lima L.F.A."/>
            <person name="Loureiro M.F."/>
            <person name="Lyra M.C.C.P."/>
            <person name="Madeira H.M.F."/>
            <person name="Manfio G.P."/>
            <person name="Maranhao A.Q."/>
            <person name="Martins W.S."/>
            <person name="di Mauro S.M.Z."/>
            <person name="de Medeiros S.R.B."/>
            <person name="Meissner R.V."/>
            <person name="Moreira M.A.M."/>
            <person name="Nascimento F.F."/>
            <person name="Nicolas M.F."/>
            <person name="Oliveira J.G."/>
            <person name="Oliveira S.C."/>
            <person name="Paixao R.F.C."/>
            <person name="Parente J.A."/>
            <person name="Pedrosa F.O."/>
            <person name="Pena S.D.J."/>
            <person name="Pereira J.O."/>
            <person name="Pereira M."/>
            <person name="Pinto L.S.R.C."/>
            <person name="Pinto L.S."/>
            <person name="Porto J.I.R."/>
            <person name="Potrich D.P."/>
            <person name="Ramalho-Neto C.E."/>
            <person name="Reis A.M.M."/>
            <person name="Rigo L.U."/>
            <person name="Rondinelli E."/>
            <person name="Santos E.B.P."/>
            <person name="Santos F.R."/>
            <person name="Schneider M.P.C."/>
            <person name="Seuanez H.N."/>
            <person name="Silva A.M.R."/>
            <person name="da Silva A.L.C."/>
            <person name="Silva D.W."/>
            <person name="Silva R."/>
            <person name="Simoes I.C."/>
            <person name="Simon D."/>
            <person name="Soares C.M.A."/>
            <person name="Soares R.B.A."/>
            <person name="Souza E.M."/>
            <person name="Souza K.R.L."/>
            <person name="Souza R.C."/>
            <person name="Steffens M.B.R."/>
            <person name="Steindel M."/>
            <person name="Teixeira S.R."/>
            <person name="Urmenyi T."/>
            <person name="Vettore A."/>
            <person name="Wassem R."/>
            <person name="Zaha A."/>
            <person name="Simpson A.J.G."/>
        </authorList>
    </citation>
    <scope>NUCLEOTIDE SEQUENCE [LARGE SCALE GENOMIC DNA]</scope>
    <source>
        <strain>ATCC 12472 / DSM 30191 / JCM 1249 / CCUG 213 / NBRC 12614 / NCIMB 9131 / NCTC 9757 / MK</strain>
    </source>
</reference>